<sequence length="503" mass="56305">MSTTLGQESKTDWASLDSDEEVQRISDKVNQLNTSENKNEDQKATNLSDRLGPKITENVDAKSEQDKATNTIAEDANTKQSENDESNLIPNKNEVRVKLADLQADPNSPLFSVKSFEELELKPELLKGIYSMKFQKPSKIQEKALPLLLSNPPRNMIGQSQSGTGKTAAFALTMLSRVDASVPKPQAICLAPSRELARQIMDVVTEMGKYTEVKTAFGIKDSVPKGAKIDAQIVIGTPGTVMDLMKRRQLDARDIKVFVLDEADNMLDQQGLGDQSMRIKHLLPRNTQIVLFSATFSERVEKYAERFAPNANEIRLKTEELSVEGIKQLYMDCQSEEHKYNVLVELYGLLTIGQSIIFCKKKDTAEEIARRMTADGHTVACLTGNLEGAQRDAIMDSFRVGTSKVLVTTNVIARGIDVSQVNLVVNYDMPLDQAGRPDPQTYLHRIGRTGRFGRVGVSINFVHDKKSWEEMNAIQEYFQRPITRVPTDDYEELEKVVKNALKM</sequence>
<protein>
    <recommendedName>
        <fullName>ATP-dependent RNA helicase dbp5</fullName>
        <ecNumber>3.6.4.13</ecNumber>
    </recommendedName>
</protein>
<comment type="function">
    <text evidence="1">ATP-dependent RNA helicase associated with the nuclear pore complex and essential for mRNA export from the nucleus. May participate in a terminal step of mRNA export through the removal of proteins that accompany mRNA through the nucleopore complex. May also be involved in early transcription (By similarity).</text>
</comment>
<comment type="catalytic activity">
    <reaction>
        <text>ATP + H2O = ADP + phosphate + H(+)</text>
        <dbReference type="Rhea" id="RHEA:13065"/>
        <dbReference type="ChEBI" id="CHEBI:15377"/>
        <dbReference type="ChEBI" id="CHEBI:15378"/>
        <dbReference type="ChEBI" id="CHEBI:30616"/>
        <dbReference type="ChEBI" id="CHEBI:43474"/>
        <dbReference type="ChEBI" id="CHEBI:456216"/>
        <dbReference type="EC" id="3.6.4.13"/>
    </reaction>
</comment>
<comment type="subunit">
    <text evidence="1">Associates with the nuclear pore complex.</text>
</comment>
<comment type="subcellular location">
    <subcellularLocation>
        <location evidence="1">Cytoplasm</location>
    </subcellularLocation>
    <subcellularLocation>
        <location>Nucleus</location>
        <location>Nuclear pore complex</location>
    </subcellularLocation>
    <subcellularLocation>
        <location evidence="1">Nucleus membrane</location>
        <topology evidence="1">Peripheral membrane protein</topology>
        <orientation evidence="1">Cytoplasmic side</orientation>
    </subcellularLocation>
    <text evidence="1">Nuclear pore complex cytoplasmic fibrils.</text>
</comment>
<comment type="domain">
    <text>The Q motif is unique to and characteristic of the DEAD box family of RNA helicases and controls ATP binding and hydrolysis.</text>
</comment>
<comment type="similarity">
    <text evidence="5">Belongs to the DEAD box helicase family. DDX19/DBP5 subfamily.</text>
</comment>
<name>DBP5_SCHPO</name>
<evidence type="ECO:0000250" key="1"/>
<evidence type="ECO:0000255" key="2">
    <source>
        <dbReference type="PROSITE-ProRule" id="PRU00541"/>
    </source>
</evidence>
<evidence type="ECO:0000255" key="3">
    <source>
        <dbReference type="PROSITE-ProRule" id="PRU00542"/>
    </source>
</evidence>
<evidence type="ECO:0000256" key="4">
    <source>
        <dbReference type="SAM" id="MobiDB-lite"/>
    </source>
</evidence>
<evidence type="ECO:0000305" key="5"/>
<evidence type="ECO:0007829" key="6">
    <source>
        <dbReference type="PDB" id="3FHO"/>
    </source>
</evidence>
<reference key="1">
    <citation type="journal article" date="2002" name="Nature">
        <title>The genome sequence of Schizosaccharomyces pombe.</title>
        <authorList>
            <person name="Wood V."/>
            <person name="Gwilliam R."/>
            <person name="Rajandream M.A."/>
            <person name="Lyne M.H."/>
            <person name="Lyne R."/>
            <person name="Stewart A."/>
            <person name="Sgouros J.G."/>
            <person name="Peat N."/>
            <person name="Hayles J."/>
            <person name="Baker S.G."/>
            <person name="Basham D."/>
            <person name="Bowman S."/>
            <person name="Brooks K."/>
            <person name="Brown D."/>
            <person name="Brown S."/>
            <person name="Chillingworth T."/>
            <person name="Churcher C.M."/>
            <person name="Collins M."/>
            <person name="Connor R."/>
            <person name="Cronin A."/>
            <person name="Davis P."/>
            <person name="Feltwell T."/>
            <person name="Fraser A."/>
            <person name="Gentles S."/>
            <person name="Goble A."/>
            <person name="Hamlin N."/>
            <person name="Harris D.E."/>
            <person name="Hidalgo J."/>
            <person name="Hodgson G."/>
            <person name="Holroyd S."/>
            <person name="Hornsby T."/>
            <person name="Howarth S."/>
            <person name="Huckle E.J."/>
            <person name="Hunt S."/>
            <person name="Jagels K."/>
            <person name="James K.D."/>
            <person name="Jones L."/>
            <person name="Jones M."/>
            <person name="Leather S."/>
            <person name="McDonald S."/>
            <person name="McLean J."/>
            <person name="Mooney P."/>
            <person name="Moule S."/>
            <person name="Mungall K.L."/>
            <person name="Murphy L.D."/>
            <person name="Niblett D."/>
            <person name="Odell C."/>
            <person name="Oliver K."/>
            <person name="O'Neil S."/>
            <person name="Pearson D."/>
            <person name="Quail M.A."/>
            <person name="Rabbinowitsch E."/>
            <person name="Rutherford K.M."/>
            <person name="Rutter S."/>
            <person name="Saunders D."/>
            <person name="Seeger K."/>
            <person name="Sharp S."/>
            <person name="Skelton J."/>
            <person name="Simmonds M.N."/>
            <person name="Squares R."/>
            <person name="Squares S."/>
            <person name="Stevens K."/>
            <person name="Taylor K."/>
            <person name="Taylor R.G."/>
            <person name="Tivey A."/>
            <person name="Walsh S.V."/>
            <person name="Warren T."/>
            <person name="Whitehead S."/>
            <person name="Woodward J.R."/>
            <person name="Volckaert G."/>
            <person name="Aert R."/>
            <person name="Robben J."/>
            <person name="Grymonprez B."/>
            <person name="Weltjens I."/>
            <person name="Vanstreels E."/>
            <person name="Rieger M."/>
            <person name="Schaefer M."/>
            <person name="Mueller-Auer S."/>
            <person name="Gabel C."/>
            <person name="Fuchs M."/>
            <person name="Duesterhoeft A."/>
            <person name="Fritzc C."/>
            <person name="Holzer E."/>
            <person name="Moestl D."/>
            <person name="Hilbert H."/>
            <person name="Borzym K."/>
            <person name="Langer I."/>
            <person name="Beck A."/>
            <person name="Lehrach H."/>
            <person name="Reinhardt R."/>
            <person name="Pohl T.M."/>
            <person name="Eger P."/>
            <person name="Zimmermann W."/>
            <person name="Wedler H."/>
            <person name="Wambutt R."/>
            <person name="Purnelle B."/>
            <person name="Goffeau A."/>
            <person name="Cadieu E."/>
            <person name="Dreano S."/>
            <person name="Gloux S."/>
            <person name="Lelaure V."/>
            <person name="Mottier S."/>
            <person name="Galibert F."/>
            <person name="Aves S.J."/>
            <person name="Xiang Z."/>
            <person name="Hunt C."/>
            <person name="Moore K."/>
            <person name="Hurst S.M."/>
            <person name="Lucas M."/>
            <person name="Rochet M."/>
            <person name="Gaillardin C."/>
            <person name="Tallada V.A."/>
            <person name="Garzon A."/>
            <person name="Thode G."/>
            <person name="Daga R.R."/>
            <person name="Cruzado L."/>
            <person name="Jimenez J."/>
            <person name="Sanchez M."/>
            <person name="del Rey F."/>
            <person name="Benito J."/>
            <person name="Dominguez A."/>
            <person name="Revuelta J.L."/>
            <person name="Moreno S."/>
            <person name="Armstrong J."/>
            <person name="Forsburg S.L."/>
            <person name="Cerutti L."/>
            <person name="Lowe T."/>
            <person name="McCombie W.R."/>
            <person name="Paulsen I."/>
            <person name="Potashkin J."/>
            <person name="Shpakovski G.V."/>
            <person name="Ussery D."/>
            <person name="Barrell B.G."/>
            <person name="Nurse P."/>
        </authorList>
    </citation>
    <scope>NUCLEOTIDE SEQUENCE [LARGE SCALE GENOMIC DNA]</scope>
    <source>
        <strain>972 / ATCC 24843</strain>
    </source>
</reference>
<keyword id="KW-0002">3D-structure</keyword>
<keyword id="KW-0067">ATP-binding</keyword>
<keyword id="KW-0963">Cytoplasm</keyword>
<keyword id="KW-0347">Helicase</keyword>
<keyword id="KW-0378">Hydrolase</keyword>
<keyword id="KW-0472">Membrane</keyword>
<keyword id="KW-0509">mRNA transport</keyword>
<keyword id="KW-0906">Nuclear pore complex</keyword>
<keyword id="KW-0547">Nucleotide-binding</keyword>
<keyword id="KW-0539">Nucleus</keyword>
<keyword id="KW-0653">Protein transport</keyword>
<keyword id="KW-1185">Reference proteome</keyword>
<keyword id="KW-0694">RNA-binding</keyword>
<keyword id="KW-0811">Translocation</keyword>
<keyword id="KW-0813">Transport</keyword>
<accession>Q09747</accession>
<organism>
    <name type="scientific">Schizosaccharomyces pombe (strain 972 / ATCC 24843)</name>
    <name type="common">Fission yeast</name>
    <dbReference type="NCBI Taxonomy" id="284812"/>
    <lineage>
        <taxon>Eukaryota</taxon>
        <taxon>Fungi</taxon>
        <taxon>Dikarya</taxon>
        <taxon>Ascomycota</taxon>
        <taxon>Taphrinomycotina</taxon>
        <taxon>Schizosaccharomycetes</taxon>
        <taxon>Schizosaccharomycetales</taxon>
        <taxon>Schizosaccharomycetaceae</taxon>
        <taxon>Schizosaccharomyces</taxon>
    </lineage>
</organism>
<proteinExistence type="evidence at protein level"/>
<gene>
    <name type="primary">dbp5</name>
    <name type="ORF">SPBC12C2.06</name>
</gene>
<dbReference type="EC" id="3.6.4.13"/>
<dbReference type="EMBL" id="CU329671">
    <property type="protein sequence ID" value="CAA90819.1"/>
    <property type="molecule type" value="Genomic_DNA"/>
</dbReference>
<dbReference type="PIR" id="T39375">
    <property type="entry name" value="T39375"/>
</dbReference>
<dbReference type="RefSeq" id="NP_596016.1">
    <property type="nucleotide sequence ID" value="NM_001021924.2"/>
</dbReference>
<dbReference type="PDB" id="3FHO">
    <property type="method" value="X-ray"/>
    <property type="resolution" value="2.80 A"/>
    <property type="chains" value="A/B=139-503"/>
</dbReference>
<dbReference type="PDBsum" id="3FHO"/>
<dbReference type="SMR" id="Q09747"/>
<dbReference type="BioGRID" id="276519">
    <property type="interactions" value="9"/>
</dbReference>
<dbReference type="FunCoup" id="Q09747">
    <property type="interactions" value="424"/>
</dbReference>
<dbReference type="STRING" id="284812.Q09747"/>
<dbReference type="iPTMnet" id="Q09747"/>
<dbReference type="PaxDb" id="4896-SPBC12C2.06.1"/>
<dbReference type="EnsemblFungi" id="SPBC12C2.06.1">
    <property type="protein sequence ID" value="SPBC12C2.06.1:pep"/>
    <property type="gene ID" value="SPBC12C2.06"/>
</dbReference>
<dbReference type="GeneID" id="2539975"/>
<dbReference type="KEGG" id="spo:2539975"/>
<dbReference type="PomBase" id="SPBC12C2.06">
    <property type="gene designation" value="dbp5"/>
</dbReference>
<dbReference type="VEuPathDB" id="FungiDB:SPBC12C2.06"/>
<dbReference type="eggNOG" id="KOG0332">
    <property type="taxonomic scope" value="Eukaryota"/>
</dbReference>
<dbReference type="HOGENOM" id="CLU_003041_1_0_1"/>
<dbReference type="InParanoid" id="Q09747"/>
<dbReference type="OMA" id="IAAETRW"/>
<dbReference type="PhylomeDB" id="Q09747"/>
<dbReference type="EvolutionaryTrace" id="Q09747"/>
<dbReference type="PRO" id="PR:Q09747"/>
<dbReference type="Proteomes" id="UP000002485">
    <property type="component" value="Chromosome II"/>
</dbReference>
<dbReference type="GO" id="GO:0010494">
    <property type="term" value="C:cytoplasmic stress granule"/>
    <property type="evidence" value="ECO:0000318"/>
    <property type="project" value="GO_Central"/>
</dbReference>
<dbReference type="GO" id="GO:0005829">
    <property type="term" value="C:cytosol"/>
    <property type="evidence" value="ECO:0007005"/>
    <property type="project" value="PomBase"/>
</dbReference>
<dbReference type="GO" id="GO:0005635">
    <property type="term" value="C:nuclear envelope"/>
    <property type="evidence" value="ECO:0007005"/>
    <property type="project" value="PomBase"/>
</dbReference>
<dbReference type="GO" id="GO:0031965">
    <property type="term" value="C:nuclear membrane"/>
    <property type="evidence" value="ECO:0007669"/>
    <property type="project" value="UniProtKB-SubCell"/>
</dbReference>
<dbReference type="GO" id="GO:0005643">
    <property type="term" value="C:nuclear pore"/>
    <property type="evidence" value="ECO:0007669"/>
    <property type="project" value="UniProtKB-SubCell"/>
</dbReference>
<dbReference type="GO" id="GO:0005634">
    <property type="term" value="C:nucleus"/>
    <property type="evidence" value="ECO:0000318"/>
    <property type="project" value="GO_Central"/>
</dbReference>
<dbReference type="GO" id="GO:0005524">
    <property type="term" value="F:ATP binding"/>
    <property type="evidence" value="ECO:0007669"/>
    <property type="project" value="UniProtKB-KW"/>
</dbReference>
<dbReference type="GO" id="GO:0016887">
    <property type="term" value="F:ATP hydrolysis activity"/>
    <property type="evidence" value="ECO:0007669"/>
    <property type="project" value="RHEA"/>
</dbReference>
<dbReference type="GO" id="GO:0003729">
    <property type="term" value="F:mRNA binding"/>
    <property type="evidence" value="ECO:0000318"/>
    <property type="project" value="GO_Central"/>
</dbReference>
<dbReference type="GO" id="GO:0003724">
    <property type="term" value="F:RNA helicase activity"/>
    <property type="evidence" value="ECO:0000318"/>
    <property type="project" value="GO_Central"/>
</dbReference>
<dbReference type="GO" id="GO:0016973">
    <property type="term" value="P:poly(A)+ mRNA export from nucleus"/>
    <property type="evidence" value="ECO:0000318"/>
    <property type="project" value="GO_Central"/>
</dbReference>
<dbReference type="GO" id="GO:0015031">
    <property type="term" value="P:protein transport"/>
    <property type="evidence" value="ECO:0007669"/>
    <property type="project" value="UniProtKB-KW"/>
</dbReference>
<dbReference type="CDD" id="cd17963">
    <property type="entry name" value="DEADc_DDX19_DDX25"/>
    <property type="match status" value="1"/>
</dbReference>
<dbReference type="CDD" id="cd18787">
    <property type="entry name" value="SF2_C_DEAD"/>
    <property type="match status" value="1"/>
</dbReference>
<dbReference type="FunFam" id="3.40.50.300:FF:000849">
    <property type="entry name" value="ATP-dependent RNA helicase DBP5"/>
    <property type="match status" value="1"/>
</dbReference>
<dbReference type="FunFam" id="3.40.50.300:FF:000318">
    <property type="entry name" value="ATP-dependent RNA helicase DDX19B"/>
    <property type="match status" value="1"/>
</dbReference>
<dbReference type="Gene3D" id="3.40.50.300">
    <property type="entry name" value="P-loop containing nucleotide triphosphate hydrolases"/>
    <property type="match status" value="2"/>
</dbReference>
<dbReference type="InterPro" id="IPR011545">
    <property type="entry name" value="DEAD/DEAH_box_helicase_dom"/>
</dbReference>
<dbReference type="InterPro" id="IPR014001">
    <property type="entry name" value="Helicase_ATP-bd"/>
</dbReference>
<dbReference type="InterPro" id="IPR001650">
    <property type="entry name" value="Helicase_C-like"/>
</dbReference>
<dbReference type="InterPro" id="IPR027417">
    <property type="entry name" value="P-loop_NTPase"/>
</dbReference>
<dbReference type="InterPro" id="IPR000629">
    <property type="entry name" value="RNA-helicase_DEAD-box_CS"/>
</dbReference>
<dbReference type="InterPro" id="IPR014014">
    <property type="entry name" value="RNA_helicase_DEAD_Q_motif"/>
</dbReference>
<dbReference type="PANTHER" id="PTHR47958">
    <property type="entry name" value="ATP-DEPENDENT RNA HELICASE DBP3"/>
    <property type="match status" value="1"/>
</dbReference>
<dbReference type="Pfam" id="PF00270">
    <property type="entry name" value="DEAD"/>
    <property type="match status" value="1"/>
</dbReference>
<dbReference type="Pfam" id="PF00271">
    <property type="entry name" value="Helicase_C"/>
    <property type="match status" value="1"/>
</dbReference>
<dbReference type="SMART" id="SM00487">
    <property type="entry name" value="DEXDc"/>
    <property type="match status" value="1"/>
</dbReference>
<dbReference type="SMART" id="SM00490">
    <property type="entry name" value="HELICc"/>
    <property type="match status" value="1"/>
</dbReference>
<dbReference type="SUPFAM" id="SSF52540">
    <property type="entry name" value="P-loop containing nucleoside triphosphate hydrolases"/>
    <property type="match status" value="1"/>
</dbReference>
<dbReference type="PROSITE" id="PS00039">
    <property type="entry name" value="DEAD_ATP_HELICASE"/>
    <property type="match status" value="1"/>
</dbReference>
<dbReference type="PROSITE" id="PS51192">
    <property type="entry name" value="HELICASE_ATP_BIND_1"/>
    <property type="match status" value="1"/>
</dbReference>
<dbReference type="PROSITE" id="PS51194">
    <property type="entry name" value="HELICASE_CTER"/>
    <property type="match status" value="1"/>
</dbReference>
<dbReference type="PROSITE" id="PS51195">
    <property type="entry name" value="Q_MOTIF"/>
    <property type="match status" value="1"/>
</dbReference>
<feature type="chain" id="PRO_0000055020" description="ATP-dependent RNA helicase dbp5">
    <location>
        <begin position="1"/>
        <end position="503"/>
    </location>
</feature>
<feature type="domain" description="Helicase ATP-binding" evidence="2">
    <location>
        <begin position="147"/>
        <end position="314"/>
    </location>
</feature>
<feature type="domain" description="Helicase C-terminal" evidence="3">
    <location>
        <begin position="325"/>
        <end position="493"/>
    </location>
</feature>
<feature type="region of interest" description="Disordered" evidence="4">
    <location>
        <begin position="1"/>
        <end position="69"/>
    </location>
</feature>
<feature type="short sequence motif" description="Q motif">
    <location>
        <begin position="114"/>
        <end position="142"/>
    </location>
</feature>
<feature type="short sequence motif" description="DEAD box">
    <location>
        <begin position="261"/>
        <end position="264"/>
    </location>
</feature>
<feature type="compositionally biased region" description="Basic and acidic residues" evidence="4">
    <location>
        <begin position="57"/>
        <end position="67"/>
    </location>
</feature>
<feature type="binding site" evidence="2">
    <location>
        <begin position="160"/>
        <end position="167"/>
    </location>
    <ligand>
        <name>ATP</name>
        <dbReference type="ChEBI" id="CHEBI:30616"/>
    </ligand>
</feature>
<feature type="strand" evidence="6">
    <location>
        <begin position="142"/>
        <end position="144"/>
    </location>
</feature>
<feature type="helix" evidence="6">
    <location>
        <begin position="145"/>
        <end position="149"/>
    </location>
</feature>
<feature type="strand" evidence="6">
    <location>
        <begin position="156"/>
        <end position="159"/>
    </location>
</feature>
<feature type="helix" evidence="6">
    <location>
        <begin position="167"/>
        <end position="177"/>
    </location>
</feature>
<feature type="strand" evidence="6">
    <location>
        <begin position="187"/>
        <end position="190"/>
    </location>
</feature>
<feature type="helix" evidence="6">
    <location>
        <begin position="194"/>
        <end position="207"/>
    </location>
</feature>
<feature type="strand" evidence="6">
    <location>
        <begin position="232"/>
        <end position="236"/>
    </location>
</feature>
<feature type="helix" evidence="6">
    <location>
        <begin position="238"/>
        <end position="246"/>
    </location>
</feature>
<feature type="strand" evidence="6">
    <location>
        <begin position="257"/>
        <end position="260"/>
    </location>
</feature>
<feature type="helix" evidence="6">
    <location>
        <begin position="263"/>
        <end position="266"/>
    </location>
</feature>
<feature type="helix" evidence="6">
    <location>
        <begin position="273"/>
        <end position="282"/>
    </location>
</feature>
<feature type="strand" evidence="6">
    <location>
        <begin position="288"/>
        <end position="294"/>
    </location>
</feature>
<feature type="helix" evidence="6">
    <location>
        <begin position="299"/>
        <end position="307"/>
    </location>
</feature>
<feature type="strand" evidence="6">
    <location>
        <begin position="312"/>
        <end position="314"/>
    </location>
</feature>
<feature type="strand" evidence="6">
    <location>
        <begin position="329"/>
        <end position="335"/>
    </location>
</feature>
<feature type="helix" evidence="6">
    <location>
        <begin position="337"/>
        <end position="347"/>
    </location>
</feature>
<feature type="strand" evidence="6">
    <location>
        <begin position="355"/>
        <end position="358"/>
    </location>
</feature>
<feature type="turn" evidence="6">
    <location>
        <begin position="362"/>
        <end position="366"/>
    </location>
</feature>
<feature type="helix" evidence="6">
    <location>
        <begin position="367"/>
        <end position="372"/>
    </location>
</feature>
<feature type="turn" evidence="6">
    <location>
        <begin position="373"/>
        <end position="376"/>
    </location>
</feature>
<feature type="helix" evidence="6">
    <location>
        <begin position="392"/>
        <end position="394"/>
    </location>
</feature>
<feature type="helix" evidence="6">
    <location>
        <begin position="396"/>
        <end position="399"/>
    </location>
</feature>
<feature type="strand" evidence="6">
    <location>
        <begin position="400"/>
        <end position="402"/>
    </location>
</feature>
<feature type="strand" evidence="6">
    <location>
        <begin position="423"/>
        <end position="425"/>
    </location>
</feature>
<feature type="helix" evidence="6">
    <location>
        <begin position="440"/>
        <end position="444"/>
    </location>
</feature>
<feature type="strand" evidence="6">
    <location>
        <begin position="457"/>
        <end position="463"/>
    </location>
</feature>
<feature type="turn" evidence="6">
    <location>
        <begin position="464"/>
        <end position="466"/>
    </location>
</feature>
<feature type="strand" evidence="6">
    <location>
        <begin position="467"/>
        <end position="470"/>
    </location>
</feature>
<feature type="helix" evidence="6">
    <location>
        <begin position="471"/>
        <end position="477"/>
    </location>
</feature>